<evidence type="ECO:0000255" key="1">
    <source>
        <dbReference type="HAMAP-Rule" id="MF_01106"/>
    </source>
</evidence>
<organism>
    <name type="scientific">Agrobacterium fabrum (strain C58 / ATCC 33970)</name>
    <name type="common">Agrobacterium tumefaciens (strain C58)</name>
    <dbReference type="NCBI Taxonomy" id="176299"/>
    <lineage>
        <taxon>Bacteria</taxon>
        <taxon>Pseudomonadati</taxon>
        <taxon>Pseudomonadota</taxon>
        <taxon>Alphaproteobacteria</taxon>
        <taxon>Hyphomicrobiales</taxon>
        <taxon>Rhizobiaceae</taxon>
        <taxon>Rhizobium/Agrobacterium group</taxon>
        <taxon>Agrobacterium</taxon>
        <taxon>Agrobacterium tumefaciens complex</taxon>
    </lineage>
</organism>
<comment type="function">
    <text evidence="1">Catalyzes two activities which are involved in the cyclic version of arginine biosynthesis: the synthesis of N-acetylglutamate from glutamate and acetyl-CoA as the acetyl donor, and of ornithine by transacetylation between N(2)-acetylornithine and glutamate.</text>
</comment>
<comment type="catalytic activity">
    <reaction evidence="1">
        <text>N(2)-acetyl-L-ornithine + L-glutamate = N-acetyl-L-glutamate + L-ornithine</text>
        <dbReference type="Rhea" id="RHEA:15349"/>
        <dbReference type="ChEBI" id="CHEBI:29985"/>
        <dbReference type="ChEBI" id="CHEBI:44337"/>
        <dbReference type="ChEBI" id="CHEBI:46911"/>
        <dbReference type="ChEBI" id="CHEBI:57805"/>
        <dbReference type="EC" id="2.3.1.35"/>
    </reaction>
</comment>
<comment type="catalytic activity">
    <reaction evidence="1">
        <text>L-glutamate + acetyl-CoA = N-acetyl-L-glutamate + CoA + H(+)</text>
        <dbReference type="Rhea" id="RHEA:24292"/>
        <dbReference type="ChEBI" id="CHEBI:15378"/>
        <dbReference type="ChEBI" id="CHEBI:29985"/>
        <dbReference type="ChEBI" id="CHEBI:44337"/>
        <dbReference type="ChEBI" id="CHEBI:57287"/>
        <dbReference type="ChEBI" id="CHEBI:57288"/>
        <dbReference type="EC" id="2.3.1.1"/>
    </reaction>
</comment>
<comment type="pathway">
    <text evidence="1">Amino-acid biosynthesis; L-arginine biosynthesis; L-ornithine and N-acetyl-L-glutamate from L-glutamate and N(2)-acetyl-L-ornithine (cyclic): step 1/1.</text>
</comment>
<comment type="pathway">
    <text evidence="1">Amino-acid biosynthesis; L-arginine biosynthesis; N(2)-acetyl-L-ornithine from L-glutamate: step 1/4.</text>
</comment>
<comment type="subunit">
    <text evidence="1">Heterotetramer of two alpha and two beta chains.</text>
</comment>
<comment type="subcellular location">
    <subcellularLocation>
        <location evidence="1">Cytoplasm</location>
    </subcellularLocation>
</comment>
<comment type="similarity">
    <text evidence="1">Belongs to the ArgJ family.</text>
</comment>
<reference key="1">
    <citation type="journal article" date="2001" name="Science">
        <title>The genome of the natural genetic engineer Agrobacterium tumefaciens C58.</title>
        <authorList>
            <person name="Wood D.W."/>
            <person name="Setubal J.C."/>
            <person name="Kaul R."/>
            <person name="Monks D.E."/>
            <person name="Kitajima J.P."/>
            <person name="Okura V.K."/>
            <person name="Zhou Y."/>
            <person name="Chen L."/>
            <person name="Wood G.E."/>
            <person name="Almeida N.F. Jr."/>
            <person name="Woo L."/>
            <person name="Chen Y."/>
            <person name="Paulsen I.T."/>
            <person name="Eisen J.A."/>
            <person name="Karp P.D."/>
            <person name="Bovee D. Sr."/>
            <person name="Chapman P."/>
            <person name="Clendenning J."/>
            <person name="Deatherage G."/>
            <person name="Gillet W."/>
            <person name="Grant C."/>
            <person name="Kutyavin T."/>
            <person name="Levy R."/>
            <person name="Li M.-J."/>
            <person name="McClelland E."/>
            <person name="Palmieri A."/>
            <person name="Raymond C."/>
            <person name="Rouse G."/>
            <person name="Saenphimmachak C."/>
            <person name="Wu Z."/>
            <person name="Romero P."/>
            <person name="Gordon D."/>
            <person name="Zhang S."/>
            <person name="Yoo H."/>
            <person name="Tao Y."/>
            <person name="Biddle P."/>
            <person name="Jung M."/>
            <person name="Krespan W."/>
            <person name="Perry M."/>
            <person name="Gordon-Kamm B."/>
            <person name="Liao L."/>
            <person name="Kim S."/>
            <person name="Hendrick C."/>
            <person name="Zhao Z.-Y."/>
            <person name="Dolan M."/>
            <person name="Chumley F."/>
            <person name="Tingey S.V."/>
            <person name="Tomb J.-F."/>
            <person name="Gordon M.P."/>
            <person name="Olson M.V."/>
            <person name="Nester E.W."/>
        </authorList>
    </citation>
    <scope>NUCLEOTIDE SEQUENCE [LARGE SCALE GENOMIC DNA]</scope>
    <source>
        <strain>C58 / ATCC 33970</strain>
    </source>
</reference>
<reference key="2">
    <citation type="journal article" date="2001" name="Science">
        <title>Genome sequence of the plant pathogen and biotechnology agent Agrobacterium tumefaciens C58.</title>
        <authorList>
            <person name="Goodner B."/>
            <person name="Hinkle G."/>
            <person name="Gattung S."/>
            <person name="Miller N."/>
            <person name="Blanchard M."/>
            <person name="Qurollo B."/>
            <person name="Goldman B.S."/>
            <person name="Cao Y."/>
            <person name="Askenazi M."/>
            <person name="Halling C."/>
            <person name="Mullin L."/>
            <person name="Houmiel K."/>
            <person name="Gordon J."/>
            <person name="Vaudin M."/>
            <person name="Iartchouk O."/>
            <person name="Epp A."/>
            <person name="Liu F."/>
            <person name="Wollam C."/>
            <person name="Allinger M."/>
            <person name="Doughty D."/>
            <person name="Scott C."/>
            <person name="Lappas C."/>
            <person name="Markelz B."/>
            <person name="Flanagan C."/>
            <person name="Crowell C."/>
            <person name="Gurson J."/>
            <person name="Lomo C."/>
            <person name="Sear C."/>
            <person name="Strub G."/>
            <person name="Cielo C."/>
            <person name="Slater S."/>
        </authorList>
    </citation>
    <scope>NUCLEOTIDE SEQUENCE [LARGE SCALE GENOMIC DNA]</scope>
    <source>
        <strain>C58 / ATCC 33970</strain>
    </source>
</reference>
<protein>
    <recommendedName>
        <fullName evidence="1">Arginine biosynthesis bifunctional protein ArgJ</fullName>
    </recommendedName>
    <domain>
        <recommendedName>
            <fullName evidence="1">Glutamate N-acetyltransferase</fullName>
            <ecNumber evidence="1">2.3.1.35</ecNumber>
        </recommendedName>
        <alternativeName>
            <fullName evidence="1">Ornithine acetyltransferase</fullName>
            <shortName evidence="1">OATase</shortName>
        </alternativeName>
        <alternativeName>
            <fullName evidence="1">Ornithine transacetylase</fullName>
        </alternativeName>
    </domain>
    <domain>
        <recommendedName>
            <fullName evidence="1">Amino-acid acetyltransferase</fullName>
            <ecNumber evidence="1">2.3.1.1</ecNumber>
        </recommendedName>
        <alternativeName>
            <fullName evidence="1">N-acetylglutamate synthase</fullName>
            <shortName evidence="1">AGSase</shortName>
        </alternativeName>
    </domain>
    <component>
        <recommendedName>
            <fullName evidence="1">Arginine biosynthesis bifunctional protein ArgJ alpha chain</fullName>
        </recommendedName>
    </component>
    <component>
        <recommendedName>
            <fullName evidence="1">Arginine biosynthesis bifunctional protein ArgJ beta chain</fullName>
        </recommendedName>
    </component>
</protein>
<name>ARGJ_AGRFC</name>
<dbReference type="EC" id="2.3.1.35" evidence="1"/>
<dbReference type="EC" id="2.3.1.1" evidence="1"/>
<dbReference type="EMBL" id="AE007870">
    <property type="protein sequence ID" value="AAK89878.1"/>
    <property type="molecule type" value="Genomic_DNA"/>
</dbReference>
<dbReference type="PIR" id="AE2989">
    <property type="entry name" value="AE2989"/>
</dbReference>
<dbReference type="PIR" id="D98294">
    <property type="entry name" value="D98294"/>
</dbReference>
<dbReference type="RefSeq" id="NP_357093.1">
    <property type="nucleotide sequence ID" value="NC_003063.2"/>
</dbReference>
<dbReference type="RefSeq" id="WP_010973106.1">
    <property type="nucleotide sequence ID" value="NC_003063.2"/>
</dbReference>
<dbReference type="SMR" id="Q8UA56"/>
<dbReference type="STRING" id="176299.Atu3518"/>
<dbReference type="MEROPS" id="T05.001"/>
<dbReference type="EnsemblBacteria" id="AAK89878">
    <property type="protein sequence ID" value="AAK89878"/>
    <property type="gene ID" value="Atu3518"/>
</dbReference>
<dbReference type="GeneID" id="1135392"/>
<dbReference type="KEGG" id="atu:Atu3518"/>
<dbReference type="PATRIC" id="fig|176299.10.peg.3359"/>
<dbReference type="eggNOG" id="COG1364">
    <property type="taxonomic scope" value="Bacteria"/>
</dbReference>
<dbReference type="HOGENOM" id="CLU_027172_1_0_5"/>
<dbReference type="OrthoDB" id="9804242at2"/>
<dbReference type="PhylomeDB" id="Q8UA56"/>
<dbReference type="BioCyc" id="AGRO:ATU3518-MONOMER"/>
<dbReference type="UniPathway" id="UPA00068">
    <property type="reaction ID" value="UER00106"/>
</dbReference>
<dbReference type="UniPathway" id="UPA00068">
    <property type="reaction ID" value="UER00111"/>
</dbReference>
<dbReference type="Proteomes" id="UP000000813">
    <property type="component" value="Chromosome linear"/>
</dbReference>
<dbReference type="GO" id="GO:0005737">
    <property type="term" value="C:cytoplasm"/>
    <property type="evidence" value="ECO:0007669"/>
    <property type="project" value="UniProtKB-SubCell"/>
</dbReference>
<dbReference type="GO" id="GO:0004358">
    <property type="term" value="F:glutamate N-acetyltransferase activity"/>
    <property type="evidence" value="ECO:0007669"/>
    <property type="project" value="UniProtKB-UniRule"/>
</dbReference>
<dbReference type="GO" id="GO:0004042">
    <property type="term" value="F:L-glutamate N-acetyltransferase activity"/>
    <property type="evidence" value="ECO:0007669"/>
    <property type="project" value="UniProtKB-UniRule"/>
</dbReference>
<dbReference type="GO" id="GO:0006526">
    <property type="term" value="P:L-arginine biosynthetic process"/>
    <property type="evidence" value="ECO:0007669"/>
    <property type="project" value="UniProtKB-UniRule"/>
</dbReference>
<dbReference type="GO" id="GO:0006592">
    <property type="term" value="P:ornithine biosynthetic process"/>
    <property type="evidence" value="ECO:0007669"/>
    <property type="project" value="TreeGrafter"/>
</dbReference>
<dbReference type="CDD" id="cd02152">
    <property type="entry name" value="OAT"/>
    <property type="match status" value="1"/>
</dbReference>
<dbReference type="FunFam" id="3.10.20.340:FF:000003">
    <property type="entry name" value="Arginine biosynthesis bifunctional protein ArgJ"/>
    <property type="match status" value="1"/>
</dbReference>
<dbReference type="FunFam" id="3.60.70.12:FF:000001">
    <property type="entry name" value="Arginine biosynthesis bifunctional protein ArgJ, chloroplastic"/>
    <property type="match status" value="1"/>
</dbReference>
<dbReference type="Gene3D" id="3.10.20.340">
    <property type="entry name" value="ArgJ beta chain, C-terminal domain"/>
    <property type="match status" value="1"/>
</dbReference>
<dbReference type="Gene3D" id="3.60.70.12">
    <property type="entry name" value="L-amino peptidase D-ALA esterase/amidase"/>
    <property type="match status" value="1"/>
</dbReference>
<dbReference type="HAMAP" id="MF_01106">
    <property type="entry name" value="ArgJ"/>
    <property type="match status" value="1"/>
</dbReference>
<dbReference type="InterPro" id="IPR002813">
    <property type="entry name" value="Arg_biosynth_ArgJ"/>
</dbReference>
<dbReference type="InterPro" id="IPR016117">
    <property type="entry name" value="ArgJ-like_dom_sf"/>
</dbReference>
<dbReference type="InterPro" id="IPR042195">
    <property type="entry name" value="ArgJ_beta_C"/>
</dbReference>
<dbReference type="NCBIfam" id="TIGR00120">
    <property type="entry name" value="ArgJ"/>
    <property type="match status" value="1"/>
</dbReference>
<dbReference type="NCBIfam" id="NF003802">
    <property type="entry name" value="PRK05388.1"/>
    <property type="match status" value="1"/>
</dbReference>
<dbReference type="PANTHER" id="PTHR23100">
    <property type="entry name" value="ARGININE BIOSYNTHESIS BIFUNCTIONAL PROTEIN ARGJ"/>
    <property type="match status" value="1"/>
</dbReference>
<dbReference type="PANTHER" id="PTHR23100:SF0">
    <property type="entry name" value="ARGININE BIOSYNTHESIS BIFUNCTIONAL PROTEIN ARGJ, MITOCHONDRIAL"/>
    <property type="match status" value="1"/>
</dbReference>
<dbReference type="Pfam" id="PF01960">
    <property type="entry name" value="ArgJ"/>
    <property type="match status" value="1"/>
</dbReference>
<dbReference type="SUPFAM" id="SSF56266">
    <property type="entry name" value="DmpA/ArgJ-like"/>
    <property type="match status" value="1"/>
</dbReference>
<gene>
    <name evidence="1" type="primary">argJ</name>
    <name type="ordered locus">Atu3518</name>
    <name type="ORF">AGR_L_2624</name>
</gene>
<keyword id="KW-0012">Acyltransferase</keyword>
<keyword id="KW-0028">Amino-acid biosynthesis</keyword>
<keyword id="KW-0055">Arginine biosynthesis</keyword>
<keyword id="KW-0068">Autocatalytic cleavage</keyword>
<keyword id="KW-0963">Cytoplasm</keyword>
<keyword id="KW-0511">Multifunctional enzyme</keyword>
<keyword id="KW-1185">Reference proteome</keyword>
<keyword id="KW-0808">Transferase</keyword>
<accession>Q8UA56</accession>
<sequence>MSVAVSPLAPKSYPDMPALRGVRMATAAAGIKYKNRTDVLLMVFDKPASVAGVFTKSKCPSAPVDFCRANLGSGAARAVVVNSGNANAFTGVKGKAATELTAKSAAAAVGCSEGEIFLASTGVIGEPLDASKFAGVLGDMNVRAEADFWQEAAKAIMTTDTYPKVSTRTAEIGGVIVTINGISKGAGMIAPDMATMLSFVVTDADIEPAALQSLLSAGVGPTFNSVTVDSDTSTSDTLMLFATGAAAEDGQVKVTSADDERLSSFRAALNDLLKDLALQVVRDGEGARKMVEVTVTGAENDAAAKKIALSIANSPLVKTAVAGEDANWGRVVMAVGKSGEMADRDRLAIWFGGVRVAVNGERDPDYSEAETTAVMRLEDITVKVDIGLGQGTATVWTCDLTKEYVAINGDYRS</sequence>
<proteinExistence type="inferred from homology"/>
<feature type="chain" id="PRO_0000002095" description="Arginine biosynthesis bifunctional protein ArgJ alpha chain" evidence="1">
    <location>
        <begin position="1"/>
        <end position="194"/>
    </location>
</feature>
<feature type="chain" id="PRO_0000002096" description="Arginine biosynthesis bifunctional protein ArgJ beta chain" evidence="1">
    <location>
        <begin position="195"/>
        <end position="413"/>
    </location>
</feature>
<feature type="active site" description="Nucleophile" evidence="1">
    <location>
        <position position="195"/>
    </location>
</feature>
<feature type="binding site" evidence="1">
    <location>
        <position position="158"/>
    </location>
    <ligand>
        <name>substrate</name>
    </ligand>
</feature>
<feature type="binding site" evidence="1">
    <location>
        <position position="184"/>
    </location>
    <ligand>
        <name>substrate</name>
    </ligand>
</feature>
<feature type="binding site" evidence="1">
    <location>
        <position position="195"/>
    </location>
    <ligand>
        <name>substrate</name>
    </ligand>
</feature>
<feature type="binding site" evidence="1">
    <location>
        <position position="285"/>
    </location>
    <ligand>
        <name>substrate</name>
    </ligand>
</feature>
<feature type="binding site" evidence="1">
    <location>
        <position position="408"/>
    </location>
    <ligand>
        <name>substrate</name>
    </ligand>
</feature>
<feature type="binding site" evidence="1">
    <location>
        <position position="413"/>
    </location>
    <ligand>
        <name>substrate</name>
    </ligand>
</feature>
<feature type="site" description="Involved in the stabilization of negative charge on the oxyanion by the formation of the oxyanion hole" evidence="1">
    <location>
        <position position="121"/>
    </location>
</feature>
<feature type="site" description="Involved in the stabilization of negative charge on the oxyanion by the formation of the oxyanion hole" evidence="1">
    <location>
        <position position="122"/>
    </location>
</feature>
<feature type="site" description="Cleavage; by autolysis" evidence="1">
    <location>
        <begin position="194"/>
        <end position="195"/>
    </location>
</feature>